<name>PB2_I02A5</name>
<protein>
    <recommendedName>
        <fullName evidence="1">Polymerase basic protein 2</fullName>
    </recommendedName>
    <alternativeName>
        <fullName evidence="1">RNA-directed RNA polymerase subunit P3</fullName>
    </alternativeName>
</protein>
<evidence type="ECO:0000255" key="1">
    <source>
        <dbReference type="HAMAP-Rule" id="MF_04062"/>
    </source>
</evidence>
<sequence length="759" mass="85807">MERIKELRDLMSQSRTREILTKTTVDHMAIIKKYTSGRQEKNPALRMKWMMAMKYPITADKRIIEMIPERNEQGQTLWSKTNDAGSDRVMVSPLAVTWWNRNGPATGTVHYPKVYKTYFEKVERLKHGTFGPVHFRNQVKIRRRVDINPGHADLSAKEAQDVIMEVVFPNEVGARTLTSESQLTITKEKKEELQDCKIAPLMVAYMLERELVRKTRFLPVAGGTSSVYIEVLHLTQGTCWEQMYTPGGEVRNDDVDQSLVIAARNIVRRATVSADPLASLLEMCHSTQIGGIRMVDILRQNPTEEQAVDICKAAMGLRISSSFSFGGFTFKRTSGSSVKKEEEVLTGNLQTLKIRVHEGYEEFTMVGRRATAILRKATRRLIQLIVSGRDEQSIAEAIIVAMVFSQEECMIKAVRGDLNFVNRANQRLNPMHQLLRHFQKDAKVLFQNWGIEPIDNVMGMIGILPDMTPSTEMSLRGVRVSKMGVDEYSSTEKVVVSIDRFLRVRDQRGNVLLSPEEVSETQGTEKLTITYSSSMMWEINGPESVLVNTYQWIIRNWETVKIQWSQDPTMLYNKMEFEPFQSLVPKAVRGQYSGFVRTLFQQMRDVLGTFDTVQIIKLLPFAAAPPEQSRMQFSSLTVNVRGSGMRILIRGNSPVFNYNKTTKRLTVLGKDAGALTEDPDEGTAGVESAVLRGFLILGKEDKRYGPALSISELSNLAKGEKANVLIGQGDVVLVMKRKRDSSILTDSQTATKRIRMAIN</sequence>
<accession>Q6J859</accession>
<comment type="function">
    <text evidence="1">Plays an essential role in transcription initiation and cap-stealing mechanism, in which cellular capped pre-mRNAs are used to generate primers for viral transcription. Recognizes and binds the 7-methylguanosine-containing cap of the target pre-RNA which is subsequently cleaved after 10-13 nucleotides by the viral protein PA. Plays a role in the initiation of the viral genome replication and modulates the activity of the ribonucleoprotein (RNP) complex.</text>
</comment>
<comment type="subunit">
    <text evidence="1">Influenza RNA polymerase is composed of three subunits: PB1, PB2 and PA. Interacts (via N-terminus) with PB1 (via C-terminus). Interacts with nucleoprotein NP (via N-terminus).</text>
</comment>
<comment type="subcellular location">
    <subcellularLocation>
        <location evidence="1">Virion</location>
    </subcellularLocation>
    <subcellularLocation>
        <location evidence="1">Host nucleus</location>
    </subcellularLocation>
</comment>
<comment type="similarity">
    <text evidence="1">Belongs to the influenza viruses PB2 family.</text>
</comment>
<dbReference type="EMBL" id="AY576389">
    <property type="protein sequence ID" value="AAT39038.2"/>
    <property type="molecule type" value="Genomic_DNA"/>
</dbReference>
<dbReference type="SMR" id="Q6J859"/>
<dbReference type="GO" id="GO:0042025">
    <property type="term" value="C:host cell nucleus"/>
    <property type="evidence" value="ECO:0007669"/>
    <property type="project" value="UniProtKB-SubCell"/>
</dbReference>
<dbReference type="GO" id="GO:0044423">
    <property type="term" value="C:virion component"/>
    <property type="evidence" value="ECO:0007669"/>
    <property type="project" value="UniProtKB-UniRule"/>
</dbReference>
<dbReference type="GO" id="GO:0003723">
    <property type="term" value="F:RNA binding"/>
    <property type="evidence" value="ECO:0007669"/>
    <property type="project" value="UniProtKB-UniRule"/>
</dbReference>
<dbReference type="GO" id="GO:0003968">
    <property type="term" value="F:RNA-directed RNA polymerase activity"/>
    <property type="evidence" value="ECO:0007669"/>
    <property type="project" value="UniProtKB-UniRule"/>
</dbReference>
<dbReference type="GO" id="GO:0006370">
    <property type="term" value="P:7-methylguanosine mRNA capping"/>
    <property type="evidence" value="ECO:0007669"/>
    <property type="project" value="UniProtKB-UniRule"/>
</dbReference>
<dbReference type="GO" id="GO:0075526">
    <property type="term" value="P:cap snatching"/>
    <property type="evidence" value="ECO:0007669"/>
    <property type="project" value="UniProtKB-UniRule"/>
</dbReference>
<dbReference type="GO" id="GO:0006351">
    <property type="term" value="P:DNA-templated transcription"/>
    <property type="evidence" value="ECO:0007669"/>
    <property type="project" value="UniProtKB-UniRule"/>
</dbReference>
<dbReference type="GO" id="GO:0039657">
    <property type="term" value="P:symbiont-mediated suppression of host gene expression"/>
    <property type="evidence" value="ECO:0007669"/>
    <property type="project" value="UniProtKB-KW"/>
</dbReference>
<dbReference type="GO" id="GO:0039523">
    <property type="term" value="P:symbiont-mediated suppression of host mRNA transcription via inhibition of RNA polymerase II activity"/>
    <property type="evidence" value="ECO:0007669"/>
    <property type="project" value="UniProtKB-UniRule"/>
</dbReference>
<dbReference type="GO" id="GO:0039694">
    <property type="term" value="P:viral RNA genome replication"/>
    <property type="evidence" value="ECO:0007669"/>
    <property type="project" value="InterPro"/>
</dbReference>
<dbReference type="FunFam" id="3.30.30.90:FF:000001">
    <property type="entry name" value="Polymerase basic protein 2"/>
    <property type="match status" value="1"/>
</dbReference>
<dbReference type="Gene3D" id="3.30.30.90">
    <property type="entry name" value="Polymerase Basic Protein 2, C-terminal domain"/>
    <property type="match status" value="1"/>
</dbReference>
<dbReference type="HAMAP" id="MF_04062">
    <property type="entry name" value="INV_PB2"/>
    <property type="match status" value="1"/>
</dbReference>
<dbReference type="InterPro" id="IPR049110">
    <property type="entry name" value="Flu_PB2_2nd"/>
</dbReference>
<dbReference type="InterPro" id="IPR049114">
    <property type="entry name" value="Flu_PB2_6th"/>
</dbReference>
<dbReference type="InterPro" id="IPR049115">
    <property type="entry name" value="Flu_PB2_C"/>
</dbReference>
<dbReference type="InterPro" id="IPR048298">
    <property type="entry name" value="Flu_PB2_CAP-bd"/>
</dbReference>
<dbReference type="InterPro" id="IPR049111">
    <property type="entry name" value="Flu_PB2_middle"/>
</dbReference>
<dbReference type="InterPro" id="IPR049106">
    <property type="entry name" value="Flu_PB2_N"/>
</dbReference>
<dbReference type="InterPro" id="IPR001591">
    <property type="entry name" value="INV_PB2"/>
</dbReference>
<dbReference type="InterPro" id="IPR049113">
    <property type="entry name" value="PB2_helical"/>
</dbReference>
<dbReference type="InterPro" id="IPR037258">
    <property type="entry name" value="PDB2_C"/>
</dbReference>
<dbReference type="Pfam" id="PF20947">
    <property type="entry name" value="Flu_PB2_1st"/>
    <property type="match status" value="1"/>
</dbReference>
<dbReference type="Pfam" id="PF20948">
    <property type="entry name" value="Flu_PB2_2nd"/>
    <property type="match status" value="1"/>
</dbReference>
<dbReference type="Pfam" id="PF20949">
    <property type="entry name" value="Flu_PB2_3rd"/>
    <property type="match status" value="1"/>
</dbReference>
<dbReference type="Pfam" id="PF20950">
    <property type="entry name" value="Flu_PB2_4th"/>
    <property type="match status" value="1"/>
</dbReference>
<dbReference type="Pfam" id="PF00604">
    <property type="entry name" value="Flu_PB2_5th"/>
    <property type="match status" value="1"/>
</dbReference>
<dbReference type="Pfam" id="PF20951">
    <property type="entry name" value="Flu_PB2_6th"/>
    <property type="match status" value="1"/>
</dbReference>
<dbReference type="Pfam" id="PF20952">
    <property type="entry name" value="Flu_PB2_7th"/>
    <property type="match status" value="1"/>
</dbReference>
<dbReference type="SUPFAM" id="SSF160453">
    <property type="entry name" value="PB2 C-terminal domain-like"/>
    <property type="match status" value="1"/>
</dbReference>
<keyword id="KW-1157">Cap snatching</keyword>
<keyword id="KW-1262">Eukaryotic host gene expression shutoff by virus</keyword>
<keyword id="KW-1191">Eukaryotic host transcription shutoff by virus</keyword>
<keyword id="KW-1190">Host gene expression shutoff by virus</keyword>
<keyword id="KW-1048">Host nucleus</keyword>
<keyword id="KW-0945">Host-virus interaction</keyword>
<keyword id="KW-1104">Inhibition of host RNA polymerase II by virus</keyword>
<keyword id="KW-0506">mRNA capping</keyword>
<keyword id="KW-0507">mRNA processing</keyword>
<keyword id="KW-1195">Viral transcription</keyword>
<keyword id="KW-0946">Virion</keyword>
<proteinExistence type="inferred from homology"/>
<reference key="1">
    <citation type="journal article" date="2004" name="Proc. Natl. Acad. Sci. U.S.A.">
        <title>H5N1 influenza: a protean pandemic threat.</title>
        <authorList>
            <person name="Guan Y."/>
            <person name="Poon L.L.M."/>
            <person name="Cheung C.Y."/>
            <person name="Ellis T.M."/>
            <person name="Lim W."/>
            <person name="Lipatov A.S."/>
            <person name="Chan K.H."/>
            <person name="Sturm-Ramirez K.M."/>
            <person name="Cheung C.L."/>
            <person name="Leung Y.H.C."/>
            <person name="Yuen K.Y."/>
            <person name="Webster R.G."/>
            <person name="Peiris J.S.M."/>
        </authorList>
    </citation>
    <scope>NUCLEOTIDE SEQUENCE [GENOMIC RNA]</scope>
</reference>
<reference key="2">
    <citation type="submission" date="2008-03" db="EMBL/GenBank/DDBJ databases">
        <authorList>
            <person name="Guan Y."/>
            <person name="Poon L.L.M."/>
            <person name="Cheung C.Y."/>
            <person name="Ellis T.M."/>
            <person name="Lim W."/>
            <person name="Lipatov A.S."/>
            <person name="Chan K.H."/>
            <person name="Sturm-Ramirez K.M."/>
            <person name="Cheung C.L."/>
            <person name="Leung Y.H.C."/>
            <person name="Yuen K.Y."/>
            <person name="Webster R.G."/>
            <person name="Peiris J.S.M."/>
        </authorList>
    </citation>
    <scope>SEQUENCE REVISION</scope>
</reference>
<organism>
    <name type="scientific">Influenza A virus (strain A/Chicken/Hong Kong/96.1/2002 H5N1 genotype Y)</name>
    <dbReference type="NCBI Taxonomy" id="279803"/>
    <lineage>
        <taxon>Viruses</taxon>
        <taxon>Riboviria</taxon>
        <taxon>Orthornavirae</taxon>
        <taxon>Negarnaviricota</taxon>
        <taxon>Polyploviricotina</taxon>
        <taxon>Insthoviricetes</taxon>
        <taxon>Articulavirales</taxon>
        <taxon>Orthomyxoviridae</taxon>
        <taxon>Alphainfluenzavirus</taxon>
        <taxon>Alphainfluenzavirus influenzae</taxon>
        <taxon>Influenza A virus</taxon>
    </lineage>
</organism>
<organismHost>
    <name type="scientific">Aves</name>
    <dbReference type="NCBI Taxonomy" id="8782"/>
</organismHost>
<organismHost>
    <name type="scientific">Felis catus</name>
    <name type="common">Cat</name>
    <name type="synonym">Felis silvestris catus</name>
    <dbReference type="NCBI Taxonomy" id="9685"/>
</organismHost>
<organismHost>
    <name type="scientific">Homo sapiens</name>
    <name type="common">Human</name>
    <dbReference type="NCBI Taxonomy" id="9606"/>
</organismHost>
<organismHost>
    <name type="scientific">Panthera pardus</name>
    <name type="common">Leopard</name>
    <name type="synonym">Felis pardus</name>
    <dbReference type="NCBI Taxonomy" id="9691"/>
</organismHost>
<organismHost>
    <name type="scientific">Panthera tigris</name>
    <name type="common">Tiger</name>
    <dbReference type="NCBI Taxonomy" id="9694"/>
</organismHost>
<organismHost>
    <name type="scientific">Sus scrofa</name>
    <name type="common">Pig</name>
    <dbReference type="NCBI Taxonomy" id="9823"/>
</organismHost>
<feature type="chain" id="PRO_0000311152" description="Polymerase basic protein 2">
    <location>
        <begin position="1"/>
        <end position="759"/>
    </location>
</feature>
<feature type="short sequence motif" description="Nuclear localization signal" evidence="1">
    <location>
        <begin position="736"/>
        <end position="739"/>
    </location>
</feature>
<feature type="site" description="Avian adaptation" evidence="1">
    <location>
        <position position="627"/>
    </location>
</feature>
<gene>
    <name evidence="1" type="primary">PB2</name>
</gene>